<reference key="1">
    <citation type="submission" date="2008-02" db="EMBL/GenBank/DDBJ databases">
        <title>Complete sequence of Shewanella woodyi ATCC 51908.</title>
        <authorList>
            <consortium name="US DOE Joint Genome Institute"/>
            <person name="Copeland A."/>
            <person name="Lucas S."/>
            <person name="Lapidus A."/>
            <person name="Glavina del Rio T."/>
            <person name="Dalin E."/>
            <person name="Tice H."/>
            <person name="Bruce D."/>
            <person name="Goodwin L."/>
            <person name="Pitluck S."/>
            <person name="Sims D."/>
            <person name="Brettin T."/>
            <person name="Detter J.C."/>
            <person name="Han C."/>
            <person name="Kuske C.R."/>
            <person name="Schmutz J."/>
            <person name="Larimer F."/>
            <person name="Land M."/>
            <person name="Hauser L."/>
            <person name="Kyrpides N."/>
            <person name="Lykidis A."/>
            <person name="Zhao J.-S."/>
            <person name="Richardson P."/>
        </authorList>
    </citation>
    <scope>NUCLEOTIDE SEQUENCE [LARGE SCALE GENOMIC DNA]</scope>
    <source>
        <strain>ATCC 51908 / MS32</strain>
    </source>
</reference>
<evidence type="ECO:0000255" key="1">
    <source>
        <dbReference type="HAMAP-Rule" id="MF_01825"/>
    </source>
</evidence>
<accession>B1KKP1</accession>
<dbReference type="EC" id="1.1.1.290" evidence="1"/>
<dbReference type="EMBL" id="CP000961">
    <property type="protein sequence ID" value="ACA87258.1"/>
    <property type="molecule type" value="Genomic_DNA"/>
</dbReference>
<dbReference type="RefSeq" id="WP_012325594.1">
    <property type="nucleotide sequence ID" value="NC_010506.1"/>
</dbReference>
<dbReference type="SMR" id="B1KKP1"/>
<dbReference type="STRING" id="392500.Swoo_2987"/>
<dbReference type="KEGG" id="swd:Swoo_2987"/>
<dbReference type="eggNOG" id="COG0111">
    <property type="taxonomic scope" value="Bacteria"/>
</dbReference>
<dbReference type="HOGENOM" id="CLU_019796_4_0_6"/>
<dbReference type="UniPathway" id="UPA00244">
    <property type="reaction ID" value="UER00310"/>
</dbReference>
<dbReference type="Proteomes" id="UP000002168">
    <property type="component" value="Chromosome"/>
</dbReference>
<dbReference type="GO" id="GO:0005737">
    <property type="term" value="C:cytoplasm"/>
    <property type="evidence" value="ECO:0007669"/>
    <property type="project" value="UniProtKB-SubCell"/>
</dbReference>
<dbReference type="GO" id="GO:0033711">
    <property type="term" value="F:4-phosphoerythronate dehydrogenase activity"/>
    <property type="evidence" value="ECO:0007669"/>
    <property type="project" value="UniProtKB-EC"/>
</dbReference>
<dbReference type="GO" id="GO:0051287">
    <property type="term" value="F:NAD binding"/>
    <property type="evidence" value="ECO:0007669"/>
    <property type="project" value="InterPro"/>
</dbReference>
<dbReference type="GO" id="GO:0046983">
    <property type="term" value="F:protein dimerization activity"/>
    <property type="evidence" value="ECO:0007669"/>
    <property type="project" value="InterPro"/>
</dbReference>
<dbReference type="GO" id="GO:0008615">
    <property type="term" value="P:pyridoxine biosynthetic process"/>
    <property type="evidence" value="ECO:0007669"/>
    <property type="project" value="UniProtKB-UniRule"/>
</dbReference>
<dbReference type="CDD" id="cd12158">
    <property type="entry name" value="ErythrP_dh"/>
    <property type="match status" value="1"/>
</dbReference>
<dbReference type="Gene3D" id="3.30.1370.170">
    <property type="match status" value="1"/>
</dbReference>
<dbReference type="Gene3D" id="3.40.50.720">
    <property type="entry name" value="NAD(P)-binding Rossmann-like Domain"/>
    <property type="match status" value="2"/>
</dbReference>
<dbReference type="HAMAP" id="MF_01825">
    <property type="entry name" value="PdxB"/>
    <property type="match status" value="1"/>
</dbReference>
<dbReference type="InterPro" id="IPR050418">
    <property type="entry name" value="D-iso_2-hydroxyacid_DH_PdxB"/>
</dbReference>
<dbReference type="InterPro" id="IPR006139">
    <property type="entry name" value="D-isomer_2_OHA_DH_cat_dom"/>
</dbReference>
<dbReference type="InterPro" id="IPR029753">
    <property type="entry name" value="D-isomer_DH_CS"/>
</dbReference>
<dbReference type="InterPro" id="IPR006140">
    <property type="entry name" value="D-isomer_DH_NAD-bd"/>
</dbReference>
<dbReference type="InterPro" id="IPR020921">
    <property type="entry name" value="Erythronate-4-P_DHase"/>
</dbReference>
<dbReference type="InterPro" id="IPR024531">
    <property type="entry name" value="Erythronate-4-P_DHase_dimer"/>
</dbReference>
<dbReference type="InterPro" id="IPR036291">
    <property type="entry name" value="NAD(P)-bd_dom_sf"/>
</dbReference>
<dbReference type="InterPro" id="IPR038251">
    <property type="entry name" value="PdxB_dimer_sf"/>
</dbReference>
<dbReference type="PANTHER" id="PTHR43761:SF1">
    <property type="entry name" value="D-ISOMER SPECIFIC 2-HYDROXYACID DEHYDROGENASE CATALYTIC DOMAIN-CONTAINING PROTEIN-RELATED"/>
    <property type="match status" value="1"/>
</dbReference>
<dbReference type="PANTHER" id="PTHR43761">
    <property type="entry name" value="D-ISOMER SPECIFIC 2-HYDROXYACID DEHYDROGENASE FAMILY PROTEIN (AFU_ORTHOLOGUE AFUA_1G13630)"/>
    <property type="match status" value="1"/>
</dbReference>
<dbReference type="Pfam" id="PF00389">
    <property type="entry name" value="2-Hacid_dh"/>
    <property type="match status" value="1"/>
</dbReference>
<dbReference type="Pfam" id="PF02826">
    <property type="entry name" value="2-Hacid_dh_C"/>
    <property type="match status" value="1"/>
</dbReference>
<dbReference type="Pfam" id="PF11890">
    <property type="entry name" value="DUF3410"/>
    <property type="match status" value="1"/>
</dbReference>
<dbReference type="SUPFAM" id="SSF52283">
    <property type="entry name" value="Formate/glycerate dehydrogenase catalytic domain-like"/>
    <property type="match status" value="1"/>
</dbReference>
<dbReference type="SUPFAM" id="SSF51735">
    <property type="entry name" value="NAD(P)-binding Rossmann-fold domains"/>
    <property type="match status" value="1"/>
</dbReference>
<dbReference type="PROSITE" id="PS00671">
    <property type="entry name" value="D_2_HYDROXYACID_DH_3"/>
    <property type="match status" value="1"/>
</dbReference>
<feature type="chain" id="PRO_1000188284" description="Erythronate-4-phosphate dehydrogenase">
    <location>
        <begin position="1"/>
        <end position="387"/>
    </location>
</feature>
<feature type="active site" evidence="1">
    <location>
        <position position="208"/>
    </location>
</feature>
<feature type="active site" evidence="1">
    <location>
        <position position="237"/>
    </location>
</feature>
<feature type="active site" description="Proton donor" evidence="1">
    <location>
        <position position="254"/>
    </location>
</feature>
<feature type="binding site" evidence="1">
    <location>
        <position position="45"/>
    </location>
    <ligand>
        <name>substrate</name>
    </ligand>
</feature>
<feature type="binding site" evidence="1">
    <location>
        <position position="67"/>
    </location>
    <ligand>
        <name>substrate</name>
    </ligand>
</feature>
<feature type="binding site" evidence="1">
    <location>
        <position position="147"/>
    </location>
    <ligand>
        <name>NAD(+)</name>
        <dbReference type="ChEBI" id="CHEBI:57540"/>
    </ligand>
</feature>
<feature type="binding site" evidence="1">
    <location>
        <position position="232"/>
    </location>
    <ligand>
        <name>NAD(+)</name>
        <dbReference type="ChEBI" id="CHEBI:57540"/>
    </ligand>
</feature>
<feature type="binding site" evidence="1">
    <location>
        <position position="257"/>
    </location>
    <ligand>
        <name>NAD(+)</name>
        <dbReference type="ChEBI" id="CHEBI:57540"/>
    </ligand>
</feature>
<feature type="binding site" evidence="1">
    <location>
        <position position="258"/>
    </location>
    <ligand>
        <name>substrate</name>
    </ligand>
</feature>
<proteinExistence type="inferred from homology"/>
<comment type="function">
    <text evidence="1">Catalyzes the oxidation of erythronate-4-phosphate to 3-hydroxy-2-oxo-4-phosphonooxybutanoate.</text>
</comment>
<comment type="catalytic activity">
    <reaction evidence="1">
        <text>4-phospho-D-erythronate + NAD(+) = (R)-3-hydroxy-2-oxo-4-phosphooxybutanoate + NADH + H(+)</text>
        <dbReference type="Rhea" id="RHEA:18829"/>
        <dbReference type="ChEBI" id="CHEBI:15378"/>
        <dbReference type="ChEBI" id="CHEBI:57540"/>
        <dbReference type="ChEBI" id="CHEBI:57945"/>
        <dbReference type="ChEBI" id="CHEBI:58538"/>
        <dbReference type="ChEBI" id="CHEBI:58766"/>
        <dbReference type="EC" id="1.1.1.290"/>
    </reaction>
</comment>
<comment type="pathway">
    <text evidence="1">Cofactor biosynthesis; pyridoxine 5'-phosphate biosynthesis; pyridoxine 5'-phosphate from D-erythrose 4-phosphate: step 2/5.</text>
</comment>
<comment type="subunit">
    <text evidence="1">Homodimer.</text>
</comment>
<comment type="subcellular location">
    <subcellularLocation>
        <location evidence="1">Cytoplasm</location>
    </subcellularLocation>
</comment>
<comment type="similarity">
    <text evidence="1">Belongs to the D-isomer specific 2-hydroxyacid dehydrogenase family. PdxB subfamily.</text>
</comment>
<protein>
    <recommendedName>
        <fullName evidence="1">Erythronate-4-phosphate dehydrogenase</fullName>
        <ecNumber evidence="1">1.1.1.290</ecNumber>
    </recommendedName>
</protein>
<keyword id="KW-0963">Cytoplasm</keyword>
<keyword id="KW-0520">NAD</keyword>
<keyword id="KW-0560">Oxidoreductase</keyword>
<keyword id="KW-0664">Pyridoxine biosynthesis</keyword>
<keyword id="KW-1185">Reference proteome</keyword>
<sequence>MKIIADENMPYVQELFGDLGIIETVNGRSLTAEMVKDADVLLVRSVTQVDASLLSKNSQLTFVGSATIGTDHIDTEYLTQRQISFSNAPGCNATAVGEFAFIAMLELANRFGTSLKDKVVGIVGAGNTGSAVARCLQAYGVEVLLHDPLIEKSDPRNFVSLDELITRANVISLHVPITKSGEHKTWYLFDESRLNSLNADTWLLNCCRGEVVDNRALINVKQQRADIKVVLDVWEGEPNPMRELIPYVEFATPHIAGYSLEGKARGTYMLYQKLMQVLGKKEEKEMLALLPSFWTEQLTLTKEPSEKALLQLSRFVYDLRDDDALFRATLLEDPSKKAPVNSSNNNGFDLMRKNHKHRREFSALTLATTGQSEVDWLLNLGYSGVGR</sequence>
<gene>
    <name evidence="1" type="primary">pdxB</name>
    <name type="ordered locus">Swoo_2987</name>
</gene>
<name>PDXB_SHEWM</name>
<organism>
    <name type="scientific">Shewanella woodyi (strain ATCC 51908 / MS32)</name>
    <dbReference type="NCBI Taxonomy" id="392500"/>
    <lineage>
        <taxon>Bacteria</taxon>
        <taxon>Pseudomonadati</taxon>
        <taxon>Pseudomonadota</taxon>
        <taxon>Gammaproteobacteria</taxon>
        <taxon>Alteromonadales</taxon>
        <taxon>Shewanellaceae</taxon>
        <taxon>Shewanella</taxon>
    </lineage>
</organism>